<gene>
    <name evidence="1" type="primary">dapB</name>
    <name type="ordered locus">VV0623</name>
</gene>
<evidence type="ECO:0000255" key="1">
    <source>
        <dbReference type="HAMAP-Rule" id="MF_00102"/>
    </source>
</evidence>
<evidence type="ECO:0000305" key="2"/>
<organism>
    <name type="scientific">Vibrio vulnificus (strain YJ016)</name>
    <dbReference type="NCBI Taxonomy" id="196600"/>
    <lineage>
        <taxon>Bacteria</taxon>
        <taxon>Pseudomonadati</taxon>
        <taxon>Pseudomonadota</taxon>
        <taxon>Gammaproteobacteria</taxon>
        <taxon>Vibrionales</taxon>
        <taxon>Vibrionaceae</taxon>
        <taxon>Vibrio</taxon>
    </lineage>
</organism>
<accession>Q7MNU2</accession>
<comment type="function">
    <text evidence="1">Catalyzes the conversion of 4-hydroxy-tetrahydrodipicolinate (HTPA) to tetrahydrodipicolinate.</text>
</comment>
<comment type="catalytic activity">
    <reaction evidence="1">
        <text>(S)-2,3,4,5-tetrahydrodipicolinate + NAD(+) + H2O = (2S,4S)-4-hydroxy-2,3,4,5-tetrahydrodipicolinate + NADH + H(+)</text>
        <dbReference type="Rhea" id="RHEA:35323"/>
        <dbReference type="ChEBI" id="CHEBI:15377"/>
        <dbReference type="ChEBI" id="CHEBI:15378"/>
        <dbReference type="ChEBI" id="CHEBI:16845"/>
        <dbReference type="ChEBI" id="CHEBI:57540"/>
        <dbReference type="ChEBI" id="CHEBI:57945"/>
        <dbReference type="ChEBI" id="CHEBI:67139"/>
        <dbReference type="EC" id="1.17.1.8"/>
    </reaction>
</comment>
<comment type="catalytic activity">
    <reaction evidence="1">
        <text>(S)-2,3,4,5-tetrahydrodipicolinate + NADP(+) + H2O = (2S,4S)-4-hydroxy-2,3,4,5-tetrahydrodipicolinate + NADPH + H(+)</text>
        <dbReference type="Rhea" id="RHEA:35331"/>
        <dbReference type="ChEBI" id="CHEBI:15377"/>
        <dbReference type="ChEBI" id="CHEBI:15378"/>
        <dbReference type="ChEBI" id="CHEBI:16845"/>
        <dbReference type="ChEBI" id="CHEBI:57783"/>
        <dbReference type="ChEBI" id="CHEBI:58349"/>
        <dbReference type="ChEBI" id="CHEBI:67139"/>
        <dbReference type="EC" id="1.17.1.8"/>
    </reaction>
</comment>
<comment type="pathway">
    <text evidence="1">Amino-acid biosynthesis; L-lysine biosynthesis via DAP pathway; (S)-tetrahydrodipicolinate from L-aspartate: step 4/4.</text>
</comment>
<comment type="subcellular location">
    <subcellularLocation>
        <location evidence="1">Cytoplasm</location>
    </subcellularLocation>
</comment>
<comment type="similarity">
    <text evidence="1">Belongs to the DapB family.</text>
</comment>
<comment type="caution">
    <text evidence="2">Was originally thought to be a dihydrodipicolinate reductase (DHDPR), catalyzing the conversion of dihydrodipicolinate to tetrahydrodipicolinate. However, it was shown in E.coli that the substrate of the enzymatic reaction is not dihydrodipicolinate (DHDP) but in fact (2S,4S)-4-hydroxy-2,3,4,5-tetrahydrodipicolinic acid (HTPA), the product released by the DapA-catalyzed reaction.</text>
</comment>
<protein>
    <recommendedName>
        <fullName evidence="1">4-hydroxy-tetrahydrodipicolinate reductase</fullName>
        <shortName evidence="1">HTPA reductase</shortName>
        <ecNumber evidence="1">1.17.1.8</ecNumber>
    </recommendedName>
</protein>
<name>DAPB_VIBVY</name>
<feature type="chain" id="PRO_0000141507" description="4-hydroxy-tetrahydrodipicolinate reductase">
    <location>
        <begin position="1"/>
        <end position="269"/>
    </location>
</feature>
<feature type="active site" description="Proton donor/acceptor" evidence="1">
    <location>
        <position position="155"/>
    </location>
</feature>
<feature type="active site" description="Proton donor" evidence="1">
    <location>
        <position position="159"/>
    </location>
</feature>
<feature type="binding site" evidence="1">
    <location>
        <begin position="8"/>
        <end position="13"/>
    </location>
    <ligand>
        <name>NAD(+)</name>
        <dbReference type="ChEBI" id="CHEBI:57540"/>
    </ligand>
</feature>
<feature type="binding site" evidence="1">
    <location>
        <position position="34"/>
    </location>
    <ligand>
        <name>NAD(+)</name>
        <dbReference type="ChEBI" id="CHEBI:57540"/>
    </ligand>
</feature>
<feature type="binding site" evidence="1">
    <location>
        <position position="35"/>
    </location>
    <ligand>
        <name>NADP(+)</name>
        <dbReference type="ChEBI" id="CHEBI:58349"/>
    </ligand>
</feature>
<feature type="binding site" evidence="1">
    <location>
        <begin position="98"/>
        <end position="100"/>
    </location>
    <ligand>
        <name>NAD(+)</name>
        <dbReference type="ChEBI" id="CHEBI:57540"/>
    </ligand>
</feature>
<feature type="binding site" evidence="1">
    <location>
        <begin position="122"/>
        <end position="125"/>
    </location>
    <ligand>
        <name>NAD(+)</name>
        <dbReference type="ChEBI" id="CHEBI:57540"/>
    </ligand>
</feature>
<feature type="binding site" evidence="1">
    <location>
        <position position="156"/>
    </location>
    <ligand>
        <name>(S)-2,3,4,5-tetrahydrodipicolinate</name>
        <dbReference type="ChEBI" id="CHEBI:16845"/>
    </ligand>
</feature>
<feature type="binding site" evidence="1">
    <location>
        <begin position="165"/>
        <end position="166"/>
    </location>
    <ligand>
        <name>(S)-2,3,4,5-tetrahydrodipicolinate</name>
        <dbReference type="ChEBI" id="CHEBI:16845"/>
    </ligand>
</feature>
<keyword id="KW-0028">Amino-acid biosynthesis</keyword>
<keyword id="KW-0963">Cytoplasm</keyword>
<keyword id="KW-0220">Diaminopimelate biosynthesis</keyword>
<keyword id="KW-0457">Lysine biosynthesis</keyword>
<keyword id="KW-0520">NAD</keyword>
<keyword id="KW-0521">NADP</keyword>
<keyword id="KW-0560">Oxidoreductase</keyword>
<dbReference type="EC" id="1.17.1.8" evidence="1"/>
<dbReference type="EMBL" id="BA000037">
    <property type="protein sequence ID" value="BAC93387.1"/>
    <property type="molecule type" value="Genomic_DNA"/>
</dbReference>
<dbReference type="RefSeq" id="WP_011149508.1">
    <property type="nucleotide sequence ID" value="NC_005139.1"/>
</dbReference>
<dbReference type="SMR" id="Q7MNU2"/>
<dbReference type="STRING" id="672.VV93_v1c05660"/>
<dbReference type="KEGG" id="vvy:VV0623"/>
<dbReference type="PATRIC" id="fig|196600.6.peg.643"/>
<dbReference type="eggNOG" id="COG0289">
    <property type="taxonomic scope" value="Bacteria"/>
</dbReference>
<dbReference type="HOGENOM" id="CLU_047479_2_1_6"/>
<dbReference type="UniPathway" id="UPA00034">
    <property type="reaction ID" value="UER00018"/>
</dbReference>
<dbReference type="Proteomes" id="UP000002675">
    <property type="component" value="Chromosome I"/>
</dbReference>
<dbReference type="GO" id="GO:0005829">
    <property type="term" value="C:cytosol"/>
    <property type="evidence" value="ECO:0007669"/>
    <property type="project" value="TreeGrafter"/>
</dbReference>
<dbReference type="GO" id="GO:0008839">
    <property type="term" value="F:4-hydroxy-tetrahydrodipicolinate reductase"/>
    <property type="evidence" value="ECO:0007669"/>
    <property type="project" value="UniProtKB-EC"/>
</dbReference>
<dbReference type="GO" id="GO:0051287">
    <property type="term" value="F:NAD binding"/>
    <property type="evidence" value="ECO:0007669"/>
    <property type="project" value="UniProtKB-UniRule"/>
</dbReference>
<dbReference type="GO" id="GO:0050661">
    <property type="term" value="F:NADP binding"/>
    <property type="evidence" value="ECO:0007669"/>
    <property type="project" value="UniProtKB-UniRule"/>
</dbReference>
<dbReference type="GO" id="GO:0016726">
    <property type="term" value="F:oxidoreductase activity, acting on CH or CH2 groups, NAD or NADP as acceptor"/>
    <property type="evidence" value="ECO:0007669"/>
    <property type="project" value="UniProtKB-UniRule"/>
</dbReference>
<dbReference type="GO" id="GO:0019877">
    <property type="term" value="P:diaminopimelate biosynthetic process"/>
    <property type="evidence" value="ECO:0007669"/>
    <property type="project" value="UniProtKB-UniRule"/>
</dbReference>
<dbReference type="GO" id="GO:0009089">
    <property type="term" value="P:lysine biosynthetic process via diaminopimelate"/>
    <property type="evidence" value="ECO:0007669"/>
    <property type="project" value="UniProtKB-UniRule"/>
</dbReference>
<dbReference type="CDD" id="cd02274">
    <property type="entry name" value="DHDPR_N"/>
    <property type="match status" value="1"/>
</dbReference>
<dbReference type="FunFam" id="3.30.360.10:FF:000004">
    <property type="entry name" value="4-hydroxy-tetrahydrodipicolinate reductase"/>
    <property type="match status" value="1"/>
</dbReference>
<dbReference type="FunFam" id="3.40.50.720:FF:000048">
    <property type="entry name" value="4-hydroxy-tetrahydrodipicolinate reductase"/>
    <property type="match status" value="1"/>
</dbReference>
<dbReference type="Gene3D" id="3.30.360.10">
    <property type="entry name" value="Dihydrodipicolinate Reductase, domain 2"/>
    <property type="match status" value="1"/>
</dbReference>
<dbReference type="Gene3D" id="3.40.50.720">
    <property type="entry name" value="NAD(P)-binding Rossmann-like Domain"/>
    <property type="match status" value="1"/>
</dbReference>
<dbReference type="HAMAP" id="MF_00102">
    <property type="entry name" value="DapB"/>
    <property type="match status" value="1"/>
</dbReference>
<dbReference type="InterPro" id="IPR022663">
    <property type="entry name" value="DapB_C"/>
</dbReference>
<dbReference type="InterPro" id="IPR000846">
    <property type="entry name" value="DapB_N"/>
</dbReference>
<dbReference type="InterPro" id="IPR022664">
    <property type="entry name" value="DapB_N_CS"/>
</dbReference>
<dbReference type="InterPro" id="IPR023940">
    <property type="entry name" value="DHDPR_bac"/>
</dbReference>
<dbReference type="InterPro" id="IPR036291">
    <property type="entry name" value="NAD(P)-bd_dom_sf"/>
</dbReference>
<dbReference type="NCBIfam" id="TIGR00036">
    <property type="entry name" value="dapB"/>
    <property type="match status" value="1"/>
</dbReference>
<dbReference type="PANTHER" id="PTHR20836:SF0">
    <property type="entry name" value="4-HYDROXY-TETRAHYDRODIPICOLINATE REDUCTASE 1, CHLOROPLASTIC-RELATED"/>
    <property type="match status" value="1"/>
</dbReference>
<dbReference type="PANTHER" id="PTHR20836">
    <property type="entry name" value="DIHYDRODIPICOLINATE REDUCTASE"/>
    <property type="match status" value="1"/>
</dbReference>
<dbReference type="Pfam" id="PF05173">
    <property type="entry name" value="DapB_C"/>
    <property type="match status" value="1"/>
</dbReference>
<dbReference type="Pfam" id="PF01113">
    <property type="entry name" value="DapB_N"/>
    <property type="match status" value="1"/>
</dbReference>
<dbReference type="PIRSF" id="PIRSF000161">
    <property type="entry name" value="DHPR"/>
    <property type="match status" value="1"/>
</dbReference>
<dbReference type="SUPFAM" id="SSF55347">
    <property type="entry name" value="Glyceraldehyde-3-phosphate dehydrogenase-like, C-terminal domain"/>
    <property type="match status" value="1"/>
</dbReference>
<dbReference type="SUPFAM" id="SSF51735">
    <property type="entry name" value="NAD(P)-binding Rossmann-fold domains"/>
    <property type="match status" value="1"/>
</dbReference>
<dbReference type="PROSITE" id="PS01298">
    <property type="entry name" value="DAPB"/>
    <property type="match status" value="1"/>
</dbReference>
<reference key="1">
    <citation type="journal article" date="2003" name="Genome Res.">
        <title>Comparative genome analysis of Vibrio vulnificus, a marine pathogen.</title>
        <authorList>
            <person name="Chen C.-Y."/>
            <person name="Wu K.-M."/>
            <person name="Chang Y.-C."/>
            <person name="Chang C.-H."/>
            <person name="Tsai H.-C."/>
            <person name="Liao T.-L."/>
            <person name="Liu Y.-M."/>
            <person name="Chen H.-J."/>
            <person name="Shen A.B.-T."/>
            <person name="Li J.-C."/>
            <person name="Su T.-L."/>
            <person name="Shao C.-P."/>
            <person name="Lee C.-T."/>
            <person name="Hor L.-I."/>
            <person name="Tsai S.-F."/>
        </authorList>
    </citation>
    <scope>NUCLEOTIDE SEQUENCE [LARGE SCALE GENOMIC DNA]</scope>
    <source>
        <strain>YJ016</strain>
    </source>
</reference>
<proteinExistence type="inferred from homology"/>
<sequence>MVRIAVAGAAGRMGRNLVKAAHHNPAAKVAAGSERPESSLVGVDLGELCGECKFDVVVCDDLAKQIDQFDVIIDFTAPASTLNNLALCQQYGKSIVIGTTGFTEEQREQIDLVAQQVPVVMAPNYSVGVNLVFKLLEKAAKVMGDYCDIEIVEAHHRHKVDAPSGTAIGMGEAIAGAMGNKLSDVAVYAREGITGERTKDEIGFATIRAGDIVGEHTAMFADIGERVEITHKATDRMTFANGAVKAAVWLHEKPAGFYTMTDVLGLNDL</sequence>